<organismHost>
    <name type="scientific">Escherichia coli</name>
    <dbReference type="NCBI Taxonomy" id="562"/>
</organismHost>
<organism>
    <name type="scientific">Enterobacteria phage T4</name>
    <name type="common">Bacteriophage T4</name>
    <dbReference type="NCBI Taxonomy" id="10665"/>
    <lineage>
        <taxon>Viruses</taxon>
        <taxon>Duplodnaviria</taxon>
        <taxon>Heunggongvirae</taxon>
        <taxon>Uroviricota</taxon>
        <taxon>Caudoviricetes</taxon>
        <taxon>Straboviridae</taxon>
        <taxon>Tevenvirinae</taxon>
        <taxon>Tequatrovirus</taxon>
    </lineage>
</organism>
<feature type="chain" id="PRO_0000165193" description="Uncharacterized 8.8 kDa protein in frd-Gp32 intergenic region">
    <location>
        <begin position="1"/>
        <end position="75"/>
    </location>
</feature>
<protein>
    <recommendedName>
        <fullName>Uncharacterized 8.8 kDa protein in frd-Gp32 intergenic region</fullName>
    </recommendedName>
</protein>
<keyword id="KW-1185">Reference proteome</keyword>
<accession>P39508</accession>
<proteinExistence type="predicted"/>
<dbReference type="EMBL" id="U20859">
    <property type="protein sequence ID" value="AAA62285.1"/>
    <property type="molecule type" value="Genomic_DNA"/>
</dbReference>
<dbReference type="EMBL" id="AF158101">
    <property type="protein sequence ID" value="AAD42580.1"/>
    <property type="molecule type" value="Genomic_DNA"/>
</dbReference>
<dbReference type="RefSeq" id="NP_049853.1">
    <property type="nucleotide sequence ID" value="NC_000866.4"/>
</dbReference>
<dbReference type="GeneID" id="1258615"/>
<dbReference type="KEGG" id="vg:1258615"/>
<dbReference type="OrthoDB" id="20342at10239"/>
<dbReference type="Proteomes" id="UP000009087">
    <property type="component" value="Segment"/>
</dbReference>
<dbReference type="InterPro" id="IPR008765">
    <property type="entry name" value="Phage_T4_Frd3"/>
</dbReference>
<dbReference type="Pfam" id="PF05798">
    <property type="entry name" value="Phage_FRD3"/>
    <property type="match status" value="1"/>
</dbReference>
<gene>
    <name type="primary">y14E</name>
    <name type="synonym">frd.3</name>
</gene>
<reference key="1">
    <citation type="submission" date="1995-01" db="EMBL/GenBank/DDBJ databases">
        <authorList>
            <person name="Poglazov A.B."/>
            <person name="Mesyanzhinov V.V."/>
            <person name="Kutter E.M."/>
        </authorList>
    </citation>
    <scope>NUCLEOTIDE SEQUENCE [GENOMIC DNA]</scope>
</reference>
<reference key="2">
    <citation type="journal article" date="2003" name="Microbiol. Mol. Biol. Rev.">
        <title>Bacteriophage T4 genome.</title>
        <authorList>
            <person name="Miller E.S."/>
            <person name="Kutter E."/>
            <person name="Mosig G."/>
            <person name="Arisaka F."/>
            <person name="Kunisawa T."/>
            <person name="Ruger W."/>
        </authorList>
    </citation>
    <scope>NUCLEOTIDE SEQUENCE [LARGE SCALE GENOMIC DNA]</scope>
</reference>
<name>Y14E_BPT4</name>
<sequence>MAKVDIDIVDFEYIEEIIRNRYPELSITSVQDSKFWSIQIVIEGPLEDLTRFMANEYCDGMDSEDAEFYMGLIEQ</sequence>